<reference key="1">
    <citation type="journal article" date="1999" name="Biochim. Biophys. Acta">
        <title>Membrane-bound transferrin-like protein (MTf): structure, evolution and selective expression during chondrogenic differentiation of mouse embryonic cells.</title>
        <authorList>
            <person name="Nakamasu K."/>
            <person name="Kawamoto T."/>
            <person name="Shen M."/>
            <person name="Gotoh O."/>
            <person name="Teramoto M."/>
            <person name="Noshiro M."/>
            <person name="Kato Y."/>
        </authorList>
    </citation>
    <scope>NUCLEOTIDE SEQUENCE [MRNA]</scope>
</reference>
<reference key="2">
    <citation type="journal article" date="2001" name="Eur. J. Biochem.">
        <title>Structure and promoter analysis of the mouse membrane-bound transferrin-like protein (MTf) gene.</title>
        <authorList>
            <person name="Nakamasu K."/>
            <person name="Kawamoto T."/>
            <person name="Yoshida E."/>
            <person name="Noshiro M."/>
            <person name="Matsuda Y."/>
            <person name="Kato Y."/>
        </authorList>
    </citation>
    <scope>NUCLEOTIDE SEQUENCE [GENOMIC DNA]</scope>
    <source>
        <strain>BALB/cJ</strain>
        <tissue>Liver</tissue>
    </source>
</reference>
<reference key="3">
    <citation type="journal article" date="2004" name="Genome Res.">
        <title>The status, quality, and expansion of the NIH full-length cDNA project: the Mammalian Gene Collection (MGC).</title>
        <authorList>
            <consortium name="The MGC Project Team"/>
        </authorList>
    </citation>
    <scope>NUCLEOTIDE SEQUENCE [LARGE SCALE MRNA]</scope>
    <source>
        <strain>FVB/N</strain>
        <tissue>Mammary gland</tissue>
    </source>
</reference>
<gene>
    <name type="primary">Meltf</name>
    <name type="synonym">Mfi2</name>
    <name type="synonym">Mtf</name>
</gene>
<evidence type="ECO:0000250" key="1"/>
<evidence type="ECO:0000250" key="2">
    <source>
        <dbReference type="UniProtKB" id="P08582"/>
    </source>
</evidence>
<evidence type="ECO:0000255" key="3"/>
<evidence type="ECO:0000255" key="4">
    <source>
        <dbReference type="PROSITE-ProRule" id="PRU00741"/>
    </source>
</evidence>
<accession>Q9R0R1</accession>
<name>TRFM_MOUSE</name>
<dbReference type="EMBL" id="AB024336">
    <property type="protein sequence ID" value="BAA86655.1"/>
    <property type="molecule type" value="mRNA"/>
</dbReference>
<dbReference type="EMBL" id="AB047799">
    <property type="protein sequence ID" value="BAB41139.1"/>
    <property type="molecule type" value="Genomic_DNA"/>
</dbReference>
<dbReference type="EMBL" id="BC040347">
    <property type="protein sequence ID" value="AAH40347.1"/>
    <property type="molecule type" value="mRNA"/>
</dbReference>
<dbReference type="CCDS" id="CCDS28108.1"/>
<dbReference type="RefSeq" id="NP_038928.1">
    <property type="nucleotide sequence ID" value="NM_013900.2"/>
</dbReference>
<dbReference type="SMR" id="Q9R0R1"/>
<dbReference type="FunCoup" id="Q9R0R1">
    <property type="interactions" value="330"/>
</dbReference>
<dbReference type="STRING" id="10090.ENSMUSP00000023464"/>
<dbReference type="MEROPS" id="S60.976"/>
<dbReference type="GlyCosmos" id="Q9R0R1">
    <property type="glycosylation" value="3 sites, No reported glycans"/>
</dbReference>
<dbReference type="GlyGen" id="Q9R0R1">
    <property type="glycosylation" value="3 sites, 2 N-linked glycans (2 sites)"/>
</dbReference>
<dbReference type="PhosphoSitePlus" id="Q9R0R1"/>
<dbReference type="SwissPalm" id="Q9R0R1"/>
<dbReference type="CPTAC" id="non-CPTAC-4067"/>
<dbReference type="jPOST" id="Q9R0R1"/>
<dbReference type="PaxDb" id="10090-ENSMUSP00000023464"/>
<dbReference type="ProteomicsDB" id="298215"/>
<dbReference type="Pumba" id="Q9R0R1"/>
<dbReference type="Antibodypedia" id="1405">
    <property type="antibodies" value="374 antibodies from 35 providers"/>
</dbReference>
<dbReference type="DNASU" id="30060"/>
<dbReference type="Ensembl" id="ENSMUST00000023464.6">
    <property type="protein sequence ID" value="ENSMUSP00000023464.6"/>
    <property type="gene ID" value="ENSMUSG00000022780.6"/>
</dbReference>
<dbReference type="GeneID" id="30060"/>
<dbReference type="KEGG" id="mmu:30060"/>
<dbReference type="UCSC" id="uc007yxv.1">
    <property type="organism name" value="mouse"/>
</dbReference>
<dbReference type="AGR" id="MGI:1353421"/>
<dbReference type="CTD" id="4241"/>
<dbReference type="MGI" id="MGI:1353421">
    <property type="gene designation" value="Meltf"/>
</dbReference>
<dbReference type="VEuPathDB" id="HostDB:ENSMUSG00000022780"/>
<dbReference type="eggNOG" id="ENOG502QSZB">
    <property type="taxonomic scope" value="Eukaryota"/>
</dbReference>
<dbReference type="GeneTree" id="ENSGT00940000159265"/>
<dbReference type="HOGENOM" id="CLU_011309_3_0_1"/>
<dbReference type="InParanoid" id="Q9R0R1"/>
<dbReference type="OMA" id="CPVPAMT"/>
<dbReference type="OrthoDB" id="9981115at2759"/>
<dbReference type="PhylomeDB" id="Q9R0R1"/>
<dbReference type="TreeFam" id="TF324013"/>
<dbReference type="Reactome" id="R-MMU-163125">
    <property type="pathway name" value="Post-translational modification: synthesis of GPI-anchored proteins"/>
</dbReference>
<dbReference type="Reactome" id="R-MMU-381426">
    <property type="pathway name" value="Regulation of Insulin-like Growth Factor (IGF) transport and uptake by Insulin-like Growth Factor Binding Proteins (IGFBPs)"/>
</dbReference>
<dbReference type="Reactome" id="R-MMU-8957275">
    <property type="pathway name" value="Post-translational protein phosphorylation"/>
</dbReference>
<dbReference type="BioGRID-ORCS" id="30060">
    <property type="hits" value="4 hits in 78 CRISPR screens"/>
</dbReference>
<dbReference type="PRO" id="PR:Q9R0R1"/>
<dbReference type="Proteomes" id="UP000000589">
    <property type="component" value="Chromosome 16"/>
</dbReference>
<dbReference type="RNAct" id="Q9R0R1">
    <property type="molecule type" value="protein"/>
</dbReference>
<dbReference type="Bgee" id="ENSMUSG00000022780">
    <property type="expression patterns" value="Expressed in vestibular epithelium and 55 other cell types or tissues"/>
</dbReference>
<dbReference type="ExpressionAtlas" id="Q9R0R1">
    <property type="expression patterns" value="baseline and differential"/>
</dbReference>
<dbReference type="GO" id="GO:0009986">
    <property type="term" value="C:cell surface"/>
    <property type="evidence" value="ECO:0007669"/>
    <property type="project" value="Ensembl"/>
</dbReference>
<dbReference type="GO" id="GO:0005615">
    <property type="term" value="C:extracellular space"/>
    <property type="evidence" value="ECO:0007669"/>
    <property type="project" value="InterPro"/>
</dbReference>
<dbReference type="GO" id="GO:0005886">
    <property type="term" value="C:plasma membrane"/>
    <property type="evidence" value="ECO:0007669"/>
    <property type="project" value="UniProtKB-SubCell"/>
</dbReference>
<dbReference type="GO" id="GO:0098552">
    <property type="term" value="C:side of membrane"/>
    <property type="evidence" value="ECO:0007669"/>
    <property type="project" value="UniProtKB-KW"/>
</dbReference>
<dbReference type="GO" id="GO:0005506">
    <property type="term" value="F:iron ion binding"/>
    <property type="evidence" value="ECO:0007669"/>
    <property type="project" value="Ensembl"/>
</dbReference>
<dbReference type="GO" id="GO:0006826">
    <property type="term" value="P:iron ion transport"/>
    <property type="evidence" value="ECO:0007669"/>
    <property type="project" value="UniProtKB-KW"/>
</dbReference>
<dbReference type="GO" id="GO:1900025">
    <property type="term" value="P:negative regulation of substrate adhesion-dependent cell spreading"/>
    <property type="evidence" value="ECO:0007669"/>
    <property type="project" value="Ensembl"/>
</dbReference>
<dbReference type="GO" id="GO:0090091">
    <property type="term" value="P:positive regulation of extracellular matrix disassembly"/>
    <property type="evidence" value="ECO:0007669"/>
    <property type="project" value="Ensembl"/>
</dbReference>
<dbReference type="GO" id="GO:0010756">
    <property type="term" value="P:positive regulation of plasminogen activation"/>
    <property type="evidence" value="ECO:0007669"/>
    <property type="project" value="Ensembl"/>
</dbReference>
<dbReference type="CDD" id="cd13529">
    <property type="entry name" value="PBP2_transferrin"/>
    <property type="match status" value="1"/>
</dbReference>
<dbReference type="FunFam" id="3.40.190.10:FF:000108">
    <property type="entry name" value="melanotransferrin"/>
    <property type="match status" value="2"/>
</dbReference>
<dbReference type="Gene3D" id="3.40.190.10">
    <property type="entry name" value="Periplasmic binding protein-like II"/>
    <property type="match status" value="4"/>
</dbReference>
<dbReference type="InterPro" id="IPR016357">
    <property type="entry name" value="Transferrin"/>
</dbReference>
<dbReference type="InterPro" id="IPR001156">
    <property type="entry name" value="Transferrin-like_dom"/>
</dbReference>
<dbReference type="InterPro" id="IPR018195">
    <property type="entry name" value="Transferrin_Fe_BS"/>
</dbReference>
<dbReference type="PANTHER" id="PTHR11485:SF21">
    <property type="entry name" value="MELANOTRANSFERRIN"/>
    <property type="match status" value="1"/>
</dbReference>
<dbReference type="PANTHER" id="PTHR11485">
    <property type="entry name" value="TRANSFERRIN"/>
    <property type="match status" value="1"/>
</dbReference>
<dbReference type="Pfam" id="PF00405">
    <property type="entry name" value="Transferrin"/>
    <property type="match status" value="2"/>
</dbReference>
<dbReference type="PIRSF" id="PIRSF002549">
    <property type="entry name" value="Transferrin"/>
    <property type="match status" value="1"/>
</dbReference>
<dbReference type="PRINTS" id="PR00422">
    <property type="entry name" value="TRANSFERRIN"/>
</dbReference>
<dbReference type="SMART" id="SM00094">
    <property type="entry name" value="TR_FER"/>
    <property type="match status" value="2"/>
</dbReference>
<dbReference type="SUPFAM" id="SSF53850">
    <property type="entry name" value="Periplasmic binding protein-like II"/>
    <property type="match status" value="2"/>
</dbReference>
<dbReference type="PROSITE" id="PS00205">
    <property type="entry name" value="TRANSFERRIN_LIKE_1"/>
    <property type="match status" value="2"/>
</dbReference>
<dbReference type="PROSITE" id="PS00206">
    <property type="entry name" value="TRANSFERRIN_LIKE_2"/>
    <property type="match status" value="2"/>
</dbReference>
<dbReference type="PROSITE" id="PS00207">
    <property type="entry name" value="TRANSFERRIN_LIKE_3"/>
    <property type="match status" value="2"/>
</dbReference>
<dbReference type="PROSITE" id="PS51408">
    <property type="entry name" value="TRANSFERRIN_LIKE_4"/>
    <property type="match status" value="2"/>
</dbReference>
<protein>
    <recommendedName>
        <fullName evidence="2">Melanotransferrin</fullName>
    </recommendedName>
    <alternativeName>
        <fullName>Membrane-bound transferrin-like protein p97</fullName>
        <shortName>MTf</shortName>
    </alternativeName>
    <cdAntigenName>CD228</cdAntigenName>
</protein>
<comment type="function">
    <text>Involved in iron cellular uptake. Seems to be internalized and then recycled back to the cell membrane. Binds a single atom of iron per subunit. Could also bind zinc.</text>
</comment>
<comment type="subcellular location">
    <subcellularLocation>
        <location evidence="1">Cell membrane</location>
        <topology evidence="1">Lipid-anchor</topology>
        <topology evidence="1">GPI-anchor</topology>
    </subcellularLocation>
</comment>
<comment type="similarity">
    <text evidence="4">Belongs to the transferrin family.</text>
</comment>
<organism>
    <name type="scientific">Mus musculus</name>
    <name type="common">Mouse</name>
    <dbReference type="NCBI Taxonomy" id="10090"/>
    <lineage>
        <taxon>Eukaryota</taxon>
        <taxon>Metazoa</taxon>
        <taxon>Chordata</taxon>
        <taxon>Craniata</taxon>
        <taxon>Vertebrata</taxon>
        <taxon>Euteleostomi</taxon>
        <taxon>Mammalia</taxon>
        <taxon>Eutheria</taxon>
        <taxon>Euarchontoglires</taxon>
        <taxon>Glires</taxon>
        <taxon>Rodentia</taxon>
        <taxon>Myomorpha</taxon>
        <taxon>Muroidea</taxon>
        <taxon>Muridae</taxon>
        <taxon>Murinae</taxon>
        <taxon>Mus</taxon>
        <taxon>Mus</taxon>
    </lineage>
</organism>
<sequence length="738" mass="81293">MRLLSVTFWLLLSLRTVVCVMEVQWCTISDAEQQKCKDMSEAFQGAGIRPSLLCVQGNSADHCVQLIKEQKADAITLDGGAIYEAGKEHGLKPVVGEVYDQDIGTSYYAVAVVRRNSNVTINTLKGVKSCHTGINRTVGWNVPVGYLVESGHLSVMGCDVLKAVGDYFGGSCVPGTGETSHSESLCRLCRGDSSGHNVCDKSPLERYYDYSGAFRCLAEGAGDVAFVKHSTVLENTDGNTLPSWGKSLMSEDFQLLCRDGSRADITEWRRCHLAKVPAHAVVVRGDMDGGLIFQLLNEGQLLFSHEDSSFQMFSSKAYSQKNLLFKDSTLELVPIATQNYEAWLGQEYLQAMKGLLCDPNRLPHYLRWCVLSAPEIQKCGDMAVAFSRQNLKPEIQCVSAESPEHCMEQIQAGHTDAVTLRGEDIYRAGKVYGLVPAAGELYAEEDRSNSYFVVAVARRDSSYSFTLDELRGKRSCHPYLGSPAGWEVPIGSLIQRGFIRPKDCDVLTAVSQFFNASCVPVNNPKNYPSALCALCVGDEKGRNKCVGSSQERYYGYSGAFRCLVEHAGDVAFVKHTTVFENTNGHNPEPWASHLRWQDYELLCPNGARAEVDQFQACNLAQMPSHAVMVRPDTNIFTVYGLLDKAQDLFGDDHNKNGFQMFDSSKYHSQDLLFKDATVRAVPVREKTTYLDWLGPDYVVALEGMLSQQCSGAGAAVQRVPLLALLLLTLAAGLLPRVL</sequence>
<keyword id="KW-1003">Cell membrane</keyword>
<keyword id="KW-1015">Disulfide bond</keyword>
<keyword id="KW-0325">Glycoprotein</keyword>
<keyword id="KW-0336">GPI-anchor</keyword>
<keyword id="KW-0406">Ion transport</keyword>
<keyword id="KW-0408">Iron</keyword>
<keyword id="KW-0410">Iron transport</keyword>
<keyword id="KW-0449">Lipoprotein</keyword>
<keyword id="KW-0472">Membrane</keyword>
<keyword id="KW-0479">Metal-binding</keyword>
<keyword id="KW-0597">Phosphoprotein</keyword>
<keyword id="KW-1185">Reference proteome</keyword>
<keyword id="KW-0677">Repeat</keyword>
<keyword id="KW-0732">Signal</keyword>
<keyword id="KW-0813">Transport</keyword>
<keyword id="KW-0862">Zinc</keyword>
<feature type="signal peptide" evidence="1">
    <location>
        <begin position="1"/>
        <end position="19"/>
    </location>
</feature>
<feature type="chain" id="PRO_0000035741" description="Melanotransferrin">
    <location>
        <begin position="20"/>
        <end position="709"/>
    </location>
</feature>
<feature type="propeptide" id="PRO_0000035742" description="Removed in mature form" evidence="3">
    <location>
        <begin position="710"/>
        <end position="738"/>
    </location>
</feature>
<feature type="domain" description="Transferrin-like 1" evidence="4">
    <location>
        <begin position="23"/>
        <end position="357"/>
    </location>
</feature>
<feature type="domain" description="Transferrin-like 2" evidence="4">
    <location>
        <begin position="366"/>
        <end position="706"/>
    </location>
</feature>
<feature type="binding site" evidence="4">
    <location>
        <position position="78"/>
    </location>
    <ligand>
        <name>Fe(3+)</name>
        <dbReference type="ChEBI" id="CHEBI:29034"/>
        <label>1</label>
    </ligand>
</feature>
<feature type="binding site" evidence="4">
    <location>
        <position position="107"/>
    </location>
    <ligand>
        <name>Fe(3+)</name>
        <dbReference type="ChEBI" id="CHEBI:29034"/>
        <label>1</label>
    </ligand>
</feature>
<feature type="binding site" evidence="4">
    <location>
        <position position="132"/>
    </location>
    <ligand>
        <name>hydrogencarbonate</name>
        <dbReference type="ChEBI" id="CHEBI:17544"/>
        <label>1</label>
    </ligand>
</feature>
<feature type="binding site" evidence="4">
    <location>
        <position position="136"/>
    </location>
    <ligand>
        <name>hydrogencarbonate</name>
        <dbReference type="ChEBI" id="CHEBI:17544"/>
        <label>1</label>
    </ligand>
</feature>
<feature type="binding site" evidence="4">
    <location>
        <position position="138"/>
    </location>
    <ligand>
        <name>hydrogencarbonate</name>
        <dbReference type="ChEBI" id="CHEBI:17544"/>
        <label>1</label>
    </ligand>
</feature>
<feature type="binding site" evidence="4">
    <location>
        <position position="139"/>
    </location>
    <ligand>
        <name>hydrogencarbonate</name>
        <dbReference type="ChEBI" id="CHEBI:17544"/>
        <label>1</label>
    </ligand>
</feature>
<feature type="binding site" evidence="4">
    <location>
        <position position="210"/>
    </location>
    <ligand>
        <name>Fe(3+)</name>
        <dbReference type="ChEBI" id="CHEBI:29034"/>
        <label>1</label>
    </ligand>
</feature>
<feature type="binding site" evidence="4">
    <location>
        <position position="279"/>
    </location>
    <ligand>
        <name>Fe(3+)</name>
        <dbReference type="ChEBI" id="CHEBI:29034"/>
        <label>1</label>
    </ligand>
</feature>
<feature type="binding site" evidence="4">
    <location>
        <position position="451"/>
    </location>
    <ligand>
        <name>Fe(3+)</name>
        <dbReference type="ChEBI" id="CHEBI:29034"/>
        <label>2</label>
    </ligand>
</feature>
<feature type="binding site" evidence="4">
    <location>
        <position position="556"/>
    </location>
    <ligand>
        <name>Fe(3+)</name>
        <dbReference type="ChEBI" id="CHEBI:29034"/>
        <label>2</label>
    </ligand>
</feature>
<feature type="binding site" evidence="4">
    <location>
        <position position="625"/>
    </location>
    <ligand>
        <name>Fe(3+)</name>
        <dbReference type="ChEBI" id="CHEBI:29034"/>
        <label>2</label>
    </ligand>
</feature>
<feature type="modified residue" description="Phosphoserine" evidence="2">
    <location>
        <position position="462"/>
    </location>
</feature>
<feature type="lipid moiety-binding region" description="GPI-anchor amidated cysteine" evidence="3">
    <location>
        <position position="709"/>
    </location>
</feature>
<feature type="glycosylation site" description="N-linked (GlcNAc...) asparagine" evidence="3">
    <location>
        <position position="118"/>
    </location>
</feature>
<feature type="glycosylation site" description="N-linked (GlcNAc...) asparagine" evidence="3">
    <location>
        <position position="135"/>
    </location>
</feature>
<feature type="glycosylation site" description="N-linked (GlcNAc...) asparagine" evidence="3">
    <location>
        <position position="515"/>
    </location>
</feature>
<feature type="disulfide bond" evidence="4">
    <location>
        <begin position="26"/>
        <end position="63"/>
    </location>
</feature>
<feature type="disulfide bond" evidence="4">
    <location>
        <begin position="36"/>
        <end position="54"/>
    </location>
</feature>
<feature type="disulfide bond" evidence="4">
    <location>
        <begin position="130"/>
        <end position="216"/>
    </location>
</feature>
<feature type="disulfide bond" evidence="4">
    <location>
        <begin position="172"/>
        <end position="189"/>
    </location>
</feature>
<feature type="disulfide bond" evidence="4">
    <location>
        <begin position="186"/>
        <end position="199"/>
    </location>
</feature>
<feature type="disulfide bond" evidence="4">
    <location>
        <begin position="257"/>
        <end position="271"/>
    </location>
</feature>
<proteinExistence type="evidence at transcript level"/>